<comment type="function">
    <text evidence="2">Component of the ubiquinol-cytochrome c reductase complex (complex III or cytochrome b-c1 complex) that is part of the mitochondrial respiratory chain. The b-c1 complex mediates electron transfer from ubiquinol to cytochrome c. Contributes to the generation of a proton gradient across the mitochondrial membrane that is then used for ATP synthesis.</text>
</comment>
<comment type="cofactor">
    <cofactor evidence="2">
        <name>heme b</name>
        <dbReference type="ChEBI" id="CHEBI:60344"/>
    </cofactor>
    <text evidence="2">Binds 2 heme b groups non-covalently.</text>
</comment>
<comment type="subunit">
    <text evidence="2">The cytochrome bc1 complex contains 11 subunits: 3 respiratory subunits (MT-CYB, CYC1 and UQCRFS1), 2 core proteins (UQCRC1 and UQCRC2) and 6 low-molecular weight proteins (UQCRH/QCR6, UQCRB/QCR7, UQCRQ/QCR8, UQCR10/QCR9, UQCR11/QCR10 and a cleavage product of UQCRFS1). This cytochrome bc1 complex then forms a dimer.</text>
</comment>
<comment type="subcellular location">
    <subcellularLocation>
        <location evidence="2">Mitochondrion inner membrane</location>
        <topology evidence="2">Multi-pass membrane protein</topology>
    </subcellularLocation>
</comment>
<comment type="miscellaneous">
    <text evidence="1">Heme 1 (or BL or b562) is low-potential and absorbs at about 562 nm, and heme 2 (or BH or b566) is high-potential and absorbs at about 566 nm.</text>
</comment>
<comment type="similarity">
    <text evidence="3 4">Belongs to the cytochrome b family.</text>
</comment>
<comment type="caution">
    <text evidence="2">The full-length protein contains only eight transmembrane helices, not nine as predicted by bioinformatics tools.</text>
</comment>
<organism>
    <name type="scientific">Antigone vipio</name>
    <name type="common">White-naped crane</name>
    <name type="synonym">Grus vipio</name>
    <dbReference type="NCBI Taxonomy" id="2717088"/>
    <lineage>
        <taxon>Eukaryota</taxon>
        <taxon>Metazoa</taxon>
        <taxon>Chordata</taxon>
        <taxon>Craniata</taxon>
        <taxon>Vertebrata</taxon>
        <taxon>Euteleostomi</taxon>
        <taxon>Archelosauria</taxon>
        <taxon>Archosauria</taxon>
        <taxon>Dinosauria</taxon>
        <taxon>Saurischia</taxon>
        <taxon>Theropoda</taxon>
        <taxon>Coelurosauria</taxon>
        <taxon>Aves</taxon>
        <taxon>Neognathae</taxon>
        <taxon>Neoaves</taxon>
        <taxon>Gruiformes</taxon>
        <taxon>Gruidae</taxon>
        <taxon>Antigone</taxon>
    </lineage>
</organism>
<evidence type="ECO:0000250" key="1"/>
<evidence type="ECO:0000250" key="2">
    <source>
        <dbReference type="UniProtKB" id="P00157"/>
    </source>
</evidence>
<evidence type="ECO:0000255" key="3">
    <source>
        <dbReference type="PROSITE-ProRule" id="PRU00967"/>
    </source>
</evidence>
<evidence type="ECO:0000255" key="4">
    <source>
        <dbReference type="PROSITE-ProRule" id="PRU00968"/>
    </source>
</evidence>
<dbReference type="EMBL" id="U11065">
    <property type="protein sequence ID" value="AAA73984.1"/>
    <property type="molecule type" value="Genomic_DNA"/>
</dbReference>
<dbReference type="SMR" id="Q34683"/>
<dbReference type="GO" id="GO:0005743">
    <property type="term" value="C:mitochondrial inner membrane"/>
    <property type="evidence" value="ECO:0007669"/>
    <property type="project" value="UniProtKB-SubCell"/>
</dbReference>
<dbReference type="GO" id="GO:0045275">
    <property type="term" value="C:respiratory chain complex III"/>
    <property type="evidence" value="ECO:0007669"/>
    <property type="project" value="InterPro"/>
</dbReference>
<dbReference type="GO" id="GO:0046872">
    <property type="term" value="F:metal ion binding"/>
    <property type="evidence" value="ECO:0007669"/>
    <property type="project" value="UniProtKB-KW"/>
</dbReference>
<dbReference type="GO" id="GO:0008121">
    <property type="term" value="F:ubiquinol-cytochrome-c reductase activity"/>
    <property type="evidence" value="ECO:0007669"/>
    <property type="project" value="InterPro"/>
</dbReference>
<dbReference type="GO" id="GO:0006122">
    <property type="term" value="P:mitochondrial electron transport, ubiquinol to cytochrome c"/>
    <property type="evidence" value="ECO:0007669"/>
    <property type="project" value="TreeGrafter"/>
</dbReference>
<dbReference type="CDD" id="cd00290">
    <property type="entry name" value="cytochrome_b_C"/>
    <property type="match status" value="1"/>
</dbReference>
<dbReference type="CDD" id="cd00284">
    <property type="entry name" value="Cytochrome_b_N"/>
    <property type="match status" value="1"/>
</dbReference>
<dbReference type="FunFam" id="1.20.810.10:FF:000002">
    <property type="entry name" value="Cytochrome b"/>
    <property type="match status" value="1"/>
</dbReference>
<dbReference type="Gene3D" id="1.20.810.10">
    <property type="entry name" value="Cytochrome Bc1 Complex, Chain C"/>
    <property type="match status" value="1"/>
</dbReference>
<dbReference type="InterPro" id="IPR005798">
    <property type="entry name" value="Cyt_b/b6_C"/>
</dbReference>
<dbReference type="InterPro" id="IPR036150">
    <property type="entry name" value="Cyt_b/b6_C_sf"/>
</dbReference>
<dbReference type="InterPro" id="IPR005797">
    <property type="entry name" value="Cyt_b/b6_N"/>
</dbReference>
<dbReference type="InterPro" id="IPR027387">
    <property type="entry name" value="Cytb/b6-like_sf"/>
</dbReference>
<dbReference type="InterPro" id="IPR030689">
    <property type="entry name" value="Cytochrome_b"/>
</dbReference>
<dbReference type="InterPro" id="IPR048260">
    <property type="entry name" value="Cytochrome_b_C_euk/bac"/>
</dbReference>
<dbReference type="InterPro" id="IPR048259">
    <property type="entry name" value="Cytochrome_b_N_euk/bac"/>
</dbReference>
<dbReference type="InterPro" id="IPR016174">
    <property type="entry name" value="Di-haem_cyt_TM"/>
</dbReference>
<dbReference type="PANTHER" id="PTHR19271">
    <property type="entry name" value="CYTOCHROME B"/>
    <property type="match status" value="1"/>
</dbReference>
<dbReference type="PANTHER" id="PTHR19271:SF16">
    <property type="entry name" value="CYTOCHROME B"/>
    <property type="match status" value="1"/>
</dbReference>
<dbReference type="Pfam" id="PF00032">
    <property type="entry name" value="Cytochrom_B_C"/>
    <property type="match status" value="1"/>
</dbReference>
<dbReference type="Pfam" id="PF00033">
    <property type="entry name" value="Cytochrome_B"/>
    <property type="match status" value="1"/>
</dbReference>
<dbReference type="PIRSF" id="PIRSF038885">
    <property type="entry name" value="COB"/>
    <property type="match status" value="1"/>
</dbReference>
<dbReference type="SUPFAM" id="SSF81648">
    <property type="entry name" value="a domain/subunit of cytochrome bc1 complex (Ubiquinol-cytochrome c reductase)"/>
    <property type="match status" value="1"/>
</dbReference>
<dbReference type="SUPFAM" id="SSF81342">
    <property type="entry name" value="Transmembrane di-heme cytochromes"/>
    <property type="match status" value="1"/>
</dbReference>
<dbReference type="PROSITE" id="PS51003">
    <property type="entry name" value="CYTB_CTER"/>
    <property type="match status" value="1"/>
</dbReference>
<dbReference type="PROSITE" id="PS51002">
    <property type="entry name" value="CYTB_NTER"/>
    <property type="match status" value="1"/>
</dbReference>
<name>CYB_ANTVP</name>
<feature type="chain" id="PRO_0000061016" description="Cytochrome b">
    <location>
        <begin position="1"/>
        <end position="380"/>
    </location>
</feature>
<feature type="transmembrane region" description="Helical" evidence="2">
    <location>
        <begin position="34"/>
        <end position="54"/>
    </location>
</feature>
<feature type="transmembrane region" description="Helical" evidence="2">
    <location>
        <begin position="78"/>
        <end position="99"/>
    </location>
</feature>
<feature type="transmembrane region" description="Helical" evidence="2">
    <location>
        <begin position="114"/>
        <end position="134"/>
    </location>
</feature>
<feature type="transmembrane region" description="Helical" evidence="2">
    <location>
        <begin position="179"/>
        <end position="199"/>
    </location>
</feature>
<feature type="transmembrane region" description="Helical" evidence="2">
    <location>
        <begin position="227"/>
        <end position="247"/>
    </location>
</feature>
<feature type="transmembrane region" description="Helical" evidence="2">
    <location>
        <begin position="289"/>
        <end position="309"/>
    </location>
</feature>
<feature type="transmembrane region" description="Helical" evidence="2">
    <location>
        <begin position="321"/>
        <end position="341"/>
    </location>
</feature>
<feature type="transmembrane region" description="Helical" evidence="2">
    <location>
        <begin position="348"/>
        <end position="368"/>
    </location>
</feature>
<feature type="binding site" description="axial binding residue" evidence="2">
    <location>
        <position position="84"/>
    </location>
    <ligand>
        <name>heme b</name>
        <dbReference type="ChEBI" id="CHEBI:60344"/>
        <label>b562</label>
    </ligand>
    <ligandPart>
        <name>Fe</name>
        <dbReference type="ChEBI" id="CHEBI:18248"/>
    </ligandPart>
</feature>
<feature type="binding site" description="axial binding residue" evidence="2">
    <location>
        <position position="98"/>
    </location>
    <ligand>
        <name>heme b</name>
        <dbReference type="ChEBI" id="CHEBI:60344"/>
        <label>b566</label>
    </ligand>
    <ligandPart>
        <name>Fe</name>
        <dbReference type="ChEBI" id="CHEBI:18248"/>
    </ligandPart>
</feature>
<feature type="binding site" description="axial binding residue" evidence="2">
    <location>
        <position position="183"/>
    </location>
    <ligand>
        <name>heme b</name>
        <dbReference type="ChEBI" id="CHEBI:60344"/>
        <label>b562</label>
    </ligand>
    <ligandPart>
        <name>Fe</name>
        <dbReference type="ChEBI" id="CHEBI:18248"/>
    </ligandPart>
</feature>
<feature type="binding site" description="axial binding residue" evidence="2">
    <location>
        <position position="197"/>
    </location>
    <ligand>
        <name>heme b</name>
        <dbReference type="ChEBI" id="CHEBI:60344"/>
        <label>b566</label>
    </ligand>
    <ligandPart>
        <name>Fe</name>
        <dbReference type="ChEBI" id="CHEBI:18248"/>
    </ligandPart>
</feature>
<feature type="binding site" evidence="2">
    <location>
        <position position="202"/>
    </location>
    <ligand>
        <name>a ubiquinone</name>
        <dbReference type="ChEBI" id="CHEBI:16389"/>
    </ligand>
</feature>
<reference key="1">
    <citation type="journal article" date="1994" name="Auk">
        <title>Phylogeny of cranes (Gruiformes: Gruidae) based on cytochrome-b DNA sequences.</title>
        <authorList>
            <person name="Krajewski C.W."/>
            <person name="Fetzner J.W."/>
        </authorList>
    </citation>
    <scope>NUCLEOTIDE SEQUENCE [GENOMIC DNA]</scope>
    <source>
        <strain>Isolate ICF 10-02</strain>
    </source>
</reference>
<gene>
    <name type="primary">MT-CYB</name>
    <name type="synonym">COB</name>
    <name type="synonym">CYTB</name>
    <name type="synonym">MTCYB</name>
</gene>
<keyword id="KW-0249">Electron transport</keyword>
<keyword id="KW-0349">Heme</keyword>
<keyword id="KW-0408">Iron</keyword>
<keyword id="KW-0472">Membrane</keyword>
<keyword id="KW-0479">Metal-binding</keyword>
<keyword id="KW-0496">Mitochondrion</keyword>
<keyword id="KW-0999">Mitochondrion inner membrane</keyword>
<keyword id="KW-0679">Respiratory chain</keyword>
<keyword id="KW-0812">Transmembrane</keyword>
<keyword id="KW-1133">Transmembrane helix</keyword>
<keyword id="KW-0813">Transport</keyword>
<keyword id="KW-0830">Ubiquinone</keyword>
<proteinExistence type="inferred from homology"/>
<sequence length="380" mass="42670">MAPNIRKSHPLLKMMNNSLIDLPTPSNISDWWNFGSLLGICLATQILTGLLLAAHYTADTTLAFSSVAHTCRNVQHGWLIRNLHANGASFFFICIYLHIGRGLYYGSYLYKETWNTGVILLLTLMATAFVGYVLPWGQMSFWGATVITNLFSAVPYIGQTLVEWAWGGFSVDNPTLTRFFTLHFLLPFMIMGLTLIHLTFLHESGSNNPLGIVSNCDKIPFHPYFSLKDILGFMLMLFPLMTLALFSPNLLGDPENFTPANPLVTPPHIKPEWYLLFAYAIRRSIPNKLGGVLALAASVLILFLAPLLHKSKQRTMTFRPFSQLLFWTLAANLLILTWVGSQPVEHPFIIIGQLASLTYFTILLILFPIIGALENKMLNY</sequence>
<protein>
    <recommendedName>
        <fullName>Cytochrome b</fullName>
    </recommendedName>
    <alternativeName>
        <fullName>Complex III subunit 3</fullName>
    </alternativeName>
    <alternativeName>
        <fullName>Complex III subunit III</fullName>
    </alternativeName>
    <alternativeName>
        <fullName>Cytochrome b-c1 complex subunit 3</fullName>
    </alternativeName>
    <alternativeName>
        <fullName>Ubiquinol-cytochrome-c reductase complex cytochrome b subunit</fullName>
    </alternativeName>
</protein>
<geneLocation type="mitochondrion"/>
<accession>Q34683</accession>